<evidence type="ECO:0000255" key="1">
    <source>
        <dbReference type="HAMAP-Rule" id="MF_00537"/>
    </source>
</evidence>
<evidence type="ECO:0000256" key="2">
    <source>
        <dbReference type="SAM" id="MobiDB-lite"/>
    </source>
</evidence>
<evidence type="ECO:0000305" key="3"/>
<dbReference type="EMBL" id="CP000113">
    <property type="protein sequence ID" value="ABF88355.1"/>
    <property type="molecule type" value="Genomic_DNA"/>
</dbReference>
<dbReference type="RefSeq" id="WP_011556458.1">
    <property type="nucleotide sequence ID" value="NC_008095.1"/>
</dbReference>
<dbReference type="SMR" id="Q1CY73"/>
<dbReference type="STRING" id="246197.MXAN_6528"/>
<dbReference type="EnsemblBacteria" id="ABF88355">
    <property type="protein sequence ID" value="ABF88355"/>
    <property type="gene ID" value="MXAN_6528"/>
</dbReference>
<dbReference type="GeneID" id="41363735"/>
<dbReference type="KEGG" id="mxa:MXAN_6528"/>
<dbReference type="eggNOG" id="COG0199">
    <property type="taxonomic scope" value="Bacteria"/>
</dbReference>
<dbReference type="HOGENOM" id="CLU_139869_0_1_7"/>
<dbReference type="OrthoDB" id="9810484at2"/>
<dbReference type="Proteomes" id="UP000002402">
    <property type="component" value="Chromosome"/>
</dbReference>
<dbReference type="GO" id="GO:0005737">
    <property type="term" value="C:cytoplasm"/>
    <property type="evidence" value="ECO:0007669"/>
    <property type="project" value="UniProtKB-ARBA"/>
</dbReference>
<dbReference type="GO" id="GO:0015935">
    <property type="term" value="C:small ribosomal subunit"/>
    <property type="evidence" value="ECO:0007669"/>
    <property type="project" value="TreeGrafter"/>
</dbReference>
<dbReference type="GO" id="GO:0019843">
    <property type="term" value="F:rRNA binding"/>
    <property type="evidence" value="ECO:0007669"/>
    <property type="project" value="UniProtKB-UniRule"/>
</dbReference>
<dbReference type="GO" id="GO:0003735">
    <property type="term" value="F:structural constituent of ribosome"/>
    <property type="evidence" value="ECO:0007669"/>
    <property type="project" value="InterPro"/>
</dbReference>
<dbReference type="GO" id="GO:0006412">
    <property type="term" value="P:translation"/>
    <property type="evidence" value="ECO:0007669"/>
    <property type="project" value="UniProtKB-UniRule"/>
</dbReference>
<dbReference type="FunFam" id="1.10.287.1480:FF:000001">
    <property type="entry name" value="30S ribosomal protein S14"/>
    <property type="match status" value="1"/>
</dbReference>
<dbReference type="Gene3D" id="1.10.287.1480">
    <property type="match status" value="1"/>
</dbReference>
<dbReference type="HAMAP" id="MF_00537">
    <property type="entry name" value="Ribosomal_uS14_1"/>
    <property type="match status" value="1"/>
</dbReference>
<dbReference type="InterPro" id="IPR001209">
    <property type="entry name" value="Ribosomal_uS14"/>
</dbReference>
<dbReference type="InterPro" id="IPR023036">
    <property type="entry name" value="Ribosomal_uS14_bac/plastid"/>
</dbReference>
<dbReference type="InterPro" id="IPR018271">
    <property type="entry name" value="Ribosomal_uS14_CS"/>
</dbReference>
<dbReference type="NCBIfam" id="NF006477">
    <property type="entry name" value="PRK08881.1"/>
    <property type="match status" value="1"/>
</dbReference>
<dbReference type="PANTHER" id="PTHR19836">
    <property type="entry name" value="30S RIBOSOMAL PROTEIN S14"/>
    <property type="match status" value="1"/>
</dbReference>
<dbReference type="PANTHER" id="PTHR19836:SF19">
    <property type="entry name" value="SMALL RIBOSOMAL SUBUNIT PROTEIN US14M"/>
    <property type="match status" value="1"/>
</dbReference>
<dbReference type="Pfam" id="PF00253">
    <property type="entry name" value="Ribosomal_S14"/>
    <property type="match status" value="1"/>
</dbReference>
<dbReference type="SUPFAM" id="SSF57716">
    <property type="entry name" value="Glucocorticoid receptor-like (DNA-binding domain)"/>
    <property type="match status" value="1"/>
</dbReference>
<dbReference type="PROSITE" id="PS00527">
    <property type="entry name" value="RIBOSOMAL_S14"/>
    <property type="match status" value="1"/>
</dbReference>
<sequence length="101" mass="11460">MAKKSKVARNAQRKALVAKYAKRRAALKARIRDRTLSYEERRAAQDALASLPRDSNPNRVTNRCALTGRPRGNLRRFGLSRIAFREKALRGEIPGVIKSSW</sequence>
<proteinExistence type="inferred from homology"/>
<protein>
    <recommendedName>
        <fullName evidence="1">Small ribosomal subunit protein uS14A</fullName>
    </recommendedName>
    <alternativeName>
        <fullName evidence="3">30S ribosomal protein S14</fullName>
    </alternativeName>
</protein>
<feature type="chain" id="PRO_0000269054" description="Small ribosomal subunit protein uS14A">
    <location>
        <begin position="1"/>
        <end position="101"/>
    </location>
</feature>
<feature type="region of interest" description="Disordered" evidence="2">
    <location>
        <begin position="47"/>
        <end position="66"/>
    </location>
</feature>
<gene>
    <name evidence="1" type="primary">rpsN</name>
    <name type="synonym">rpsN2</name>
    <name type="ordered locus">MXAN_6528</name>
</gene>
<comment type="function">
    <text evidence="1">Binds 16S rRNA, required for the assembly of 30S particles and may also be responsible for determining the conformation of the 16S rRNA at the A site.</text>
</comment>
<comment type="subunit">
    <text evidence="1">Part of the 30S ribosomal subunit. Contacts proteins S3 and S10.</text>
</comment>
<comment type="similarity">
    <text evidence="1">Belongs to the universal ribosomal protein uS14 family.</text>
</comment>
<name>RS14_MYXXD</name>
<accession>Q1CY73</accession>
<organism>
    <name type="scientific">Myxococcus xanthus (strain DK1622)</name>
    <dbReference type="NCBI Taxonomy" id="246197"/>
    <lineage>
        <taxon>Bacteria</taxon>
        <taxon>Pseudomonadati</taxon>
        <taxon>Myxococcota</taxon>
        <taxon>Myxococcia</taxon>
        <taxon>Myxococcales</taxon>
        <taxon>Cystobacterineae</taxon>
        <taxon>Myxococcaceae</taxon>
        <taxon>Myxococcus</taxon>
    </lineage>
</organism>
<keyword id="KW-1185">Reference proteome</keyword>
<keyword id="KW-0687">Ribonucleoprotein</keyword>
<keyword id="KW-0689">Ribosomal protein</keyword>
<keyword id="KW-0694">RNA-binding</keyword>
<keyword id="KW-0699">rRNA-binding</keyword>
<reference key="1">
    <citation type="journal article" date="2006" name="Proc. Natl. Acad. Sci. U.S.A.">
        <title>Evolution of sensory complexity recorded in a myxobacterial genome.</title>
        <authorList>
            <person name="Goldman B.S."/>
            <person name="Nierman W.C."/>
            <person name="Kaiser D."/>
            <person name="Slater S.C."/>
            <person name="Durkin A.S."/>
            <person name="Eisen J.A."/>
            <person name="Ronning C.M."/>
            <person name="Barbazuk W.B."/>
            <person name="Blanchard M."/>
            <person name="Field C."/>
            <person name="Halling C."/>
            <person name="Hinkle G."/>
            <person name="Iartchuk O."/>
            <person name="Kim H.S."/>
            <person name="Mackenzie C."/>
            <person name="Madupu R."/>
            <person name="Miller N."/>
            <person name="Shvartsbeyn A."/>
            <person name="Sullivan S.A."/>
            <person name="Vaudin M."/>
            <person name="Wiegand R."/>
            <person name="Kaplan H.B."/>
        </authorList>
    </citation>
    <scope>NUCLEOTIDE SEQUENCE [LARGE SCALE GENOMIC DNA]</scope>
    <source>
        <strain>DK1622</strain>
    </source>
</reference>